<accession>Q10744</accession>
<comment type="catalytic activity">
    <reaction>
        <text>Inactivates bleomycin B2 (a cytotoxic glycometallopeptide) by hydrolysis of a carboxyamide bond of beta-aminoalanine, but also shows general aminopeptidase activity. The specificity varies somewhat with source, but amino acid arylamides of Met, Leu and Ala are preferred.</text>
        <dbReference type="EC" id="3.4.22.40"/>
    </reaction>
</comment>
<comment type="subunit">
    <text evidence="1">Homohexamer.</text>
</comment>
<comment type="subcellular location">
    <subcellularLocation>
        <location>Cytoplasm</location>
    </subcellularLocation>
</comment>
<comment type="similarity">
    <text evidence="2 3">Belongs to the peptidase C1 family.</text>
</comment>
<dbReference type="EC" id="3.4.22.40"/>
<dbReference type="EMBL" id="Z30340">
    <property type="protein sequence ID" value="CAA82997.1"/>
    <property type="molecule type" value="Genomic_DNA"/>
</dbReference>
<dbReference type="EMBL" id="L26223">
    <property type="protein sequence ID" value="AAA25250.1"/>
    <property type="molecule type" value="Genomic_DNA"/>
</dbReference>
<dbReference type="PIR" id="S48200">
    <property type="entry name" value="S48200"/>
</dbReference>
<dbReference type="SMR" id="Q10744"/>
<dbReference type="MEROPS" id="C01.086"/>
<dbReference type="GO" id="GO:0005737">
    <property type="term" value="C:cytoplasm"/>
    <property type="evidence" value="ECO:0007669"/>
    <property type="project" value="UniProtKB-SubCell"/>
</dbReference>
<dbReference type="GO" id="GO:0070005">
    <property type="term" value="F:cysteine-type aminopeptidase activity"/>
    <property type="evidence" value="ECO:0007669"/>
    <property type="project" value="InterPro"/>
</dbReference>
<dbReference type="GO" id="GO:0004197">
    <property type="term" value="F:cysteine-type endopeptidase activity"/>
    <property type="evidence" value="ECO:0007669"/>
    <property type="project" value="UniProtKB-EC"/>
</dbReference>
<dbReference type="GO" id="GO:0043418">
    <property type="term" value="P:homocysteine catabolic process"/>
    <property type="evidence" value="ECO:0007669"/>
    <property type="project" value="TreeGrafter"/>
</dbReference>
<dbReference type="GO" id="GO:0006508">
    <property type="term" value="P:proteolysis"/>
    <property type="evidence" value="ECO:0007669"/>
    <property type="project" value="UniProtKB-KW"/>
</dbReference>
<dbReference type="GO" id="GO:0009636">
    <property type="term" value="P:response to toxic substance"/>
    <property type="evidence" value="ECO:0007669"/>
    <property type="project" value="TreeGrafter"/>
</dbReference>
<dbReference type="CDD" id="cd00585">
    <property type="entry name" value="Peptidase_C1B"/>
    <property type="match status" value="1"/>
</dbReference>
<dbReference type="Gene3D" id="3.90.70.10">
    <property type="entry name" value="Cysteine proteinases"/>
    <property type="match status" value="1"/>
</dbReference>
<dbReference type="InterPro" id="IPR038765">
    <property type="entry name" value="Papain-like_cys_pep_sf"/>
</dbReference>
<dbReference type="InterPro" id="IPR000169">
    <property type="entry name" value="Pept_cys_AS"/>
</dbReference>
<dbReference type="InterPro" id="IPR025660">
    <property type="entry name" value="Pept_his_AS"/>
</dbReference>
<dbReference type="InterPro" id="IPR004134">
    <property type="entry name" value="Peptidase_C1B"/>
</dbReference>
<dbReference type="PANTHER" id="PTHR10363">
    <property type="entry name" value="BLEOMYCIN HYDROLASE"/>
    <property type="match status" value="1"/>
</dbReference>
<dbReference type="PANTHER" id="PTHR10363:SF2">
    <property type="entry name" value="BLEOMYCIN HYDROLASE"/>
    <property type="match status" value="1"/>
</dbReference>
<dbReference type="Pfam" id="PF03051">
    <property type="entry name" value="Peptidase_C1_2"/>
    <property type="match status" value="1"/>
</dbReference>
<dbReference type="PIRSF" id="PIRSF005700">
    <property type="entry name" value="PepC"/>
    <property type="match status" value="1"/>
</dbReference>
<dbReference type="SUPFAM" id="SSF54001">
    <property type="entry name" value="Cysteine proteinases"/>
    <property type="match status" value="1"/>
</dbReference>
<dbReference type="PROSITE" id="PS00139">
    <property type="entry name" value="THIOL_PROTEASE_CYS"/>
    <property type="match status" value="1"/>
</dbReference>
<dbReference type="PROSITE" id="PS00639">
    <property type="entry name" value="THIOL_PROTEASE_HIS"/>
    <property type="match status" value="1"/>
</dbReference>
<proteinExistence type="inferred from homology"/>
<keyword id="KW-0031">Aminopeptidase</keyword>
<keyword id="KW-0963">Cytoplasm</keyword>
<keyword id="KW-0378">Hydrolase</keyword>
<keyword id="KW-0645">Protease</keyword>
<keyword id="KW-0788">Thiol protease</keyword>
<organism>
    <name type="scientific">Lactobacillus helveticus</name>
    <name type="common">Lactobacillus suntoryeus</name>
    <dbReference type="NCBI Taxonomy" id="1587"/>
    <lineage>
        <taxon>Bacteria</taxon>
        <taxon>Bacillati</taxon>
        <taxon>Bacillota</taxon>
        <taxon>Bacilli</taxon>
        <taxon>Lactobacillales</taxon>
        <taxon>Lactobacillaceae</taxon>
        <taxon>Lactobacillus</taxon>
    </lineage>
</organism>
<name>PEPC_LACHE</name>
<protein>
    <recommendedName>
        <fullName>Aminopeptidase C</fullName>
        <ecNumber>3.4.22.40</ecNumber>
    </recommendedName>
    <alternativeName>
        <fullName>Bleomycin hydrolase</fullName>
    </alternativeName>
</protein>
<gene>
    <name type="primary">pepC</name>
</gene>
<sequence length="449" mass="51400">MAKEINNDTIAKFENDLNNHPVFNVASHAAQENGIYKASQNLQTKIDLDPIFSIEIDTGKPADQKQSGRCWMFSALNTMRHPLQKKFKLQDFELSQNYTNFWDKFEKSNWFFENVIATADKDLGDRKVSFLFATPQQDGGQWDMLCGIIEKYGIVPKSVYPETANATNSSALNDTLNTLLRKDGLELRRLVNAGKSEDEVQARKEEMLNDVFRVLAISTCVPPKKFNFEYRDDNHNYHIDKDITPKEFFDKYVGMDLANHISTINAPTSDKPFHKVFSVEYLGNVEGGRQVRHLNLKVDEMKDLIIKQLNNGEVVWFGSNVVKDSERRAGLLATNLYRRDQLFDVDFSMSKADKLDSGESMMDHAMVITGVDIVDGKPTKWKIENSWGEKPGFKGYFVMSDSWFDSFVYQAVINKDILPEDLKKAYDEGKDNPIQLLPWDPMGALAFKY</sequence>
<reference key="1">
    <citation type="journal article" date="1994" name="Eur. J. Biochem.">
        <title>Characterization and expression of the Lactobacillus helveticus pepC gene encoding a general aminopeptidase.</title>
        <authorList>
            <person name="Vesanto E."/>
            <person name="Varmanen P."/>
            <person name="Steele J.L."/>
            <person name="Palva A."/>
        </authorList>
    </citation>
    <scope>NUCLEOTIDE SEQUENCE [GENOMIC DNA]</scope>
    <source>
        <strain>53/7</strain>
        <strain>CNRZ 32</strain>
    </source>
</reference>
<reference key="2">
    <citation type="journal article" date="1994" name="Appl. Environ. Microbiol.">
        <title>Characterization of the Lactobacillus helveticus CNRZ32 pepC gene.</title>
        <authorList>
            <person name="Fernandez L."/>
            <person name="Bhowmik T."/>
            <person name="Steele J.L."/>
        </authorList>
    </citation>
    <scope>NUCLEOTIDE SEQUENCE [GENOMIC DNA]</scope>
    <source>
        <strain>CNRZ 32</strain>
    </source>
</reference>
<evidence type="ECO:0000250" key="1"/>
<evidence type="ECO:0000255" key="2">
    <source>
        <dbReference type="PROSITE-ProRule" id="PRU10088"/>
    </source>
</evidence>
<evidence type="ECO:0000255" key="3">
    <source>
        <dbReference type="PROSITE-ProRule" id="PRU10089"/>
    </source>
</evidence>
<evidence type="ECO:0000305" key="4"/>
<feature type="chain" id="PRO_0000050591" description="Aminopeptidase C">
    <location>
        <begin position="1"/>
        <end position="449"/>
    </location>
</feature>
<feature type="active site" evidence="1">
    <location>
        <position position="70"/>
    </location>
</feature>
<feature type="active site" evidence="1">
    <location>
        <position position="364"/>
    </location>
</feature>
<feature type="active site" evidence="1">
    <location>
        <position position="385"/>
    </location>
</feature>
<feature type="sequence variant">
    <original>N</original>
    <variation>T</variation>
    <location>
        <position position="7"/>
    </location>
</feature>
<feature type="sequence variant">
    <original>D</original>
    <variation>N</variation>
    <location>
        <position position="63"/>
    </location>
</feature>
<feature type="sequence variant">
    <original>L</original>
    <variation>V</variation>
    <location>
        <position position="179"/>
    </location>
</feature>
<feature type="sequence variant">
    <original>N</original>
    <variation>D</variation>
    <location>
        <position position="234"/>
    </location>
</feature>
<feature type="sequence variant">
    <original>NN</original>
    <variation>KS</variation>
    <location>
        <begin position="310"/>
        <end position="311"/>
    </location>
</feature>
<feature type="sequence variant">
    <original>A</original>
    <variation>D</variation>
    <location>
        <position position="333"/>
    </location>
</feature>
<feature type="sequence conflict" description="In Ref. 2; AAA25250." evidence="4" ref="2">
    <original>IV</original>
    <variation>NG</variation>
    <location>
        <begin position="373"/>
        <end position="374"/>
    </location>
</feature>
<feature type="sequence conflict" description="In Ref. 2." evidence="4" ref="2">
    <original>QLLPWDPMGALAFKY</original>
    <variation>NYCHGIQWVL</variation>
    <location>
        <begin position="435"/>
        <end position="449"/>
    </location>
</feature>